<proteinExistence type="inferred from homology"/>
<keyword id="KW-0067">ATP-binding</keyword>
<keyword id="KW-0963">Cytoplasm</keyword>
<keyword id="KW-0436">Ligase</keyword>
<keyword id="KW-0547">Nucleotide-binding</keyword>
<keyword id="KW-0566">Pantothenate biosynthesis</keyword>
<reference key="1">
    <citation type="journal article" date="2009" name="PLoS Genet.">
        <title>Organised genome dynamics in the Escherichia coli species results in highly diverse adaptive paths.</title>
        <authorList>
            <person name="Touchon M."/>
            <person name="Hoede C."/>
            <person name="Tenaillon O."/>
            <person name="Barbe V."/>
            <person name="Baeriswyl S."/>
            <person name="Bidet P."/>
            <person name="Bingen E."/>
            <person name="Bonacorsi S."/>
            <person name="Bouchier C."/>
            <person name="Bouvet O."/>
            <person name="Calteau A."/>
            <person name="Chiapello H."/>
            <person name="Clermont O."/>
            <person name="Cruveiller S."/>
            <person name="Danchin A."/>
            <person name="Diard M."/>
            <person name="Dossat C."/>
            <person name="Karoui M.E."/>
            <person name="Frapy E."/>
            <person name="Garry L."/>
            <person name="Ghigo J.M."/>
            <person name="Gilles A.M."/>
            <person name="Johnson J."/>
            <person name="Le Bouguenec C."/>
            <person name="Lescat M."/>
            <person name="Mangenot S."/>
            <person name="Martinez-Jehanne V."/>
            <person name="Matic I."/>
            <person name="Nassif X."/>
            <person name="Oztas S."/>
            <person name="Petit M.A."/>
            <person name="Pichon C."/>
            <person name="Rouy Z."/>
            <person name="Ruf C.S."/>
            <person name="Schneider D."/>
            <person name="Tourret J."/>
            <person name="Vacherie B."/>
            <person name="Vallenet D."/>
            <person name="Medigue C."/>
            <person name="Rocha E.P.C."/>
            <person name="Denamur E."/>
        </authorList>
    </citation>
    <scope>NUCLEOTIDE SEQUENCE [LARGE SCALE GENOMIC DNA]</scope>
    <source>
        <strain>IAI1</strain>
    </source>
</reference>
<dbReference type="EC" id="6.3.2.1" evidence="1"/>
<dbReference type="EMBL" id="CU928160">
    <property type="protein sequence ID" value="CAQ97020.1"/>
    <property type="molecule type" value="Genomic_DNA"/>
</dbReference>
<dbReference type="RefSeq" id="WP_000905383.1">
    <property type="nucleotide sequence ID" value="NC_011741.1"/>
</dbReference>
<dbReference type="SMR" id="B7M174"/>
<dbReference type="GeneID" id="75202052"/>
<dbReference type="KEGG" id="ecr:ECIAI1_0131"/>
<dbReference type="HOGENOM" id="CLU_047148_0_0_6"/>
<dbReference type="UniPathway" id="UPA00028">
    <property type="reaction ID" value="UER00005"/>
</dbReference>
<dbReference type="GO" id="GO:0005829">
    <property type="term" value="C:cytosol"/>
    <property type="evidence" value="ECO:0007669"/>
    <property type="project" value="TreeGrafter"/>
</dbReference>
<dbReference type="GO" id="GO:0005524">
    <property type="term" value="F:ATP binding"/>
    <property type="evidence" value="ECO:0007669"/>
    <property type="project" value="UniProtKB-KW"/>
</dbReference>
<dbReference type="GO" id="GO:0004592">
    <property type="term" value="F:pantoate-beta-alanine ligase activity"/>
    <property type="evidence" value="ECO:0007669"/>
    <property type="project" value="UniProtKB-UniRule"/>
</dbReference>
<dbReference type="GO" id="GO:0015940">
    <property type="term" value="P:pantothenate biosynthetic process"/>
    <property type="evidence" value="ECO:0007669"/>
    <property type="project" value="UniProtKB-UniRule"/>
</dbReference>
<dbReference type="CDD" id="cd00560">
    <property type="entry name" value="PanC"/>
    <property type="match status" value="1"/>
</dbReference>
<dbReference type="FunFam" id="3.30.1300.10:FF:000001">
    <property type="entry name" value="Pantothenate synthetase"/>
    <property type="match status" value="1"/>
</dbReference>
<dbReference type="FunFam" id="3.40.50.620:FF:000013">
    <property type="entry name" value="Pantothenate synthetase"/>
    <property type="match status" value="1"/>
</dbReference>
<dbReference type="Gene3D" id="3.40.50.620">
    <property type="entry name" value="HUPs"/>
    <property type="match status" value="1"/>
</dbReference>
<dbReference type="Gene3D" id="3.30.1300.10">
    <property type="entry name" value="Pantoate-beta-alanine ligase, C-terminal domain"/>
    <property type="match status" value="1"/>
</dbReference>
<dbReference type="HAMAP" id="MF_00158">
    <property type="entry name" value="PanC"/>
    <property type="match status" value="1"/>
</dbReference>
<dbReference type="InterPro" id="IPR004821">
    <property type="entry name" value="Cyt_trans-like"/>
</dbReference>
<dbReference type="InterPro" id="IPR003721">
    <property type="entry name" value="Pantoate_ligase"/>
</dbReference>
<dbReference type="InterPro" id="IPR042176">
    <property type="entry name" value="Pantoate_ligase_C"/>
</dbReference>
<dbReference type="InterPro" id="IPR014729">
    <property type="entry name" value="Rossmann-like_a/b/a_fold"/>
</dbReference>
<dbReference type="NCBIfam" id="TIGR00125">
    <property type="entry name" value="cyt_tran_rel"/>
    <property type="match status" value="1"/>
</dbReference>
<dbReference type="NCBIfam" id="TIGR00018">
    <property type="entry name" value="panC"/>
    <property type="match status" value="1"/>
</dbReference>
<dbReference type="PANTHER" id="PTHR21299">
    <property type="entry name" value="CYTIDYLATE KINASE/PANTOATE-BETA-ALANINE LIGASE"/>
    <property type="match status" value="1"/>
</dbReference>
<dbReference type="PANTHER" id="PTHR21299:SF1">
    <property type="entry name" value="PANTOATE--BETA-ALANINE LIGASE"/>
    <property type="match status" value="1"/>
</dbReference>
<dbReference type="Pfam" id="PF02569">
    <property type="entry name" value="Pantoate_ligase"/>
    <property type="match status" value="1"/>
</dbReference>
<dbReference type="SUPFAM" id="SSF52374">
    <property type="entry name" value="Nucleotidylyl transferase"/>
    <property type="match status" value="1"/>
</dbReference>
<accession>B7M174</accession>
<feature type="chain" id="PRO_1000118148" description="Pantothenate synthetase">
    <location>
        <begin position="1"/>
        <end position="283"/>
    </location>
</feature>
<feature type="active site" description="Proton donor" evidence="1">
    <location>
        <position position="37"/>
    </location>
</feature>
<feature type="binding site" evidence="1">
    <location>
        <begin position="30"/>
        <end position="37"/>
    </location>
    <ligand>
        <name>ATP</name>
        <dbReference type="ChEBI" id="CHEBI:30616"/>
    </ligand>
</feature>
<feature type="binding site" evidence="1">
    <location>
        <position position="61"/>
    </location>
    <ligand>
        <name>(R)-pantoate</name>
        <dbReference type="ChEBI" id="CHEBI:15980"/>
    </ligand>
</feature>
<feature type="binding site" evidence="1">
    <location>
        <position position="61"/>
    </location>
    <ligand>
        <name>beta-alanine</name>
        <dbReference type="ChEBI" id="CHEBI:57966"/>
    </ligand>
</feature>
<feature type="binding site" evidence="1">
    <location>
        <begin position="149"/>
        <end position="152"/>
    </location>
    <ligand>
        <name>ATP</name>
        <dbReference type="ChEBI" id="CHEBI:30616"/>
    </ligand>
</feature>
<feature type="binding site" evidence="1">
    <location>
        <position position="155"/>
    </location>
    <ligand>
        <name>(R)-pantoate</name>
        <dbReference type="ChEBI" id="CHEBI:15980"/>
    </ligand>
</feature>
<feature type="binding site" evidence="1">
    <location>
        <begin position="186"/>
        <end position="189"/>
    </location>
    <ligand>
        <name>ATP</name>
        <dbReference type="ChEBI" id="CHEBI:30616"/>
    </ligand>
</feature>
<sequence>MLIIETLPLLRQQIRRLRMEGKRVALVPTMGNLHDGHMKLVDEAKARADVVVVSIFVNPMQFDRPEDLARYPRTLQEDCEKLNKRKVDLVFAPSVKEIYPNGTETHTYVDVPGLSTMLEGASRPGHFRGVSTIVSKLFNLVQPDIACFGEKDFQQLALIRKMVADMGFDIEIVGVPIMRAKDGLALSSRNGYLTAEQRKIAPGLYKVLSSIADKLQAGERDLDEIITIAGQELNEKGFRADDIQIRDADTLLEVSETSKRAVILVAAWLGDARLIDNKMVELA</sequence>
<gene>
    <name evidence="1" type="primary">panC</name>
    <name type="ordered locus">ECIAI1_0131</name>
</gene>
<name>PANC_ECO8A</name>
<comment type="function">
    <text evidence="1">Catalyzes the condensation of pantoate with beta-alanine in an ATP-dependent reaction via a pantoyl-adenylate intermediate.</text>
</comment>
<comment type="catalytic activity">
    <reaction evidence="1">
        <text>(R)-pantoate + beta-alanine + ATP = (R)-pantothenate + AMP + diphosphate + H(+)</text>
        <dbReference type="Rhea" id="RHEA:10912"/>
        <dbReference type="ChEBI" id="CHEBI:15378"/>
        <dbReference type="ChEBI" id="CHEBI:15980"/>
        <dbReference type="ChEBI" id="CHEBI:29032"/>
        <dbReference type="ChEBI" id="CHEBI:30616"/>
        <dbReference type="ChEBI" id="CHEBI:33019"/>
        <dbReference type="ChEBI" id="CHEBI:57966"/>
        <dbReference type="ChEBI" id="CHEBI:456215"/>
        <dbReference type="EC" id="6.3.2.1"/>
    </reaction>
</comment>
<comment type="pathway">
    <text evidence="1">Cofactor biosynthesis; (R)-pantothenate biosynthesis; (R)-pantothenate from (R)-pantoate and beta-alanine: step 1/1.</text>
</comment>
<comment type="subunit">
    <text evidence="1">Homodimer.</text>
</comment>
<comment type="subcellular location">
    <subcellularLocation>
        <location evidence="1">Cytoplasm</location>
    </subcellularLocation>
</comment>
<comment type="miscellaneous">
    <text evidence="1">The reaction proceeds by a bi uni uni bi ping pong mechanism.</text>
</comment>
<comment type="similarity">
    <text evidence="1">Belongs to the pantothenate synthetase family.</text>
</comment>
<evidence type="ECO:0000255" key="1">
    <source>
        <dbReference type="HAMAP-Rule" id="MF_00158"/>
    </source>
</evidence>
<organism>
    <name type="scientific">Escherichia coli O8 (strain IAI1)</name>
    <dbReference type="NCBI Taxonomy" id="585034"/>
    <lineage>
        <taxon>Bacteria</taxon>
        <taxon>Pseudomonadati</taxon>
        <taxon>Pseudomonadota</taxon>
        <taxon>Gammaproteobacteria</taxon>
        <taxon>Enterobacterales</taxon>
        <taxon>Enterobacteriaceae</taxon>
        <taxon>Escherichia</taxon>
    </lineage>
</organism>
<protein>
    <recommendedName>
        <fullName evidence="1">Pantothenate synthetase</fullName>
        <shortName evidence="1">PS</shortName>
        <ecNumber evidence="1">6.3.2.1</ecNumber>
    </recommendedName>
    <alternativeName>
        <fullName evidence="1">Pantoate--beta-alanine ligase</fullName>
    </alternativeName>
    <alternativeName>
        <fullName evidence="1">Pantoate-activating enzyme</fullName>
    </alternativeName>
</protein>